<dbReference type="EC" id="6.3.2.6" evidence="1"/>
<dbReference type="EMBL" id="BA000017">
    <property type="protein sequence ID" value="BAB57228.1"/>
    <property type="molecule type" value="Genomic_DNA"/>
</dbReference>
<dbReference type="RefSeq" id="WP_000174053.1">
    <property type="nucleotide sequence ID" value="NC_002758.2"/>
</dbReference>
<dbReference type="SMR" id="P65891"/>
<dbReference type="KEGG" id="sav:SAV1066"/>
<dbReference type="HOGENOM" id="CLU_061495_2_0_9"/>
<dbReference type="PhylomeDB" id="P65891"/>
<dbReference type="UniPathway" id="UPA00074">
    <property type="reaction ID" value="UER00131"/>
</dbReference>
<dbReference type="Proteomes" id="UP000002481">
    <property type="component" value="Chromosome"/>
</dbReference>
<dbReference type="GO" id="GO:0005524">
    <property type="term" value="F:ATP binding"/>
    <property type="evidence" value="ECO:0007669"/>
    <property type="project" value="UniProtKB-KW"/>
</dbReference>
<dbReference type="GO" id="GO:0004639">
    <property type="term" value="F:phosphoribosylaminoimidazolesuccinocarboxamide synthase activity"/>
    <property type="evidence" value="ECO:0007669"/>
    <property type="project" value="UniProtKB-UniRule"/>
</dbReference>
<dbReference type="GO" id="GO:0006189">
    <property type="term" value="P:'de novo' IMP biosynthetic process"/>
    <property type="evidence" value="ECO:0007669"/>
    <property type="project" value="UniProtKB-UniRule"/>
</dbReference>
<dbReference type="GO" id="GO:0009236">
    <property type="term" value="P:cobalamin biosynthetic process"/>
    <property type="evidence" value="ECO:0007669"/>
    <property type="project" value="InterPro"/>
</dbReference>
<dbReference type="CDD" id="cd01415">
    <property type="entry name" value="SAICAR_synt_PurC"/>
    <property type="match status" value="1"/>
</dbReference>
<dbReference type="FunFam" id="3.30.200.20:FF:000189">
    <property type="entry name" value="Phosphoribosylaminoimidazole-succinocarboxamide synthase"/>
    <property type="match status" value="1"/>
</dbReference>
<dbReference type="FunFam" id="3.30.470.20:FF:000006">
    <property type="entry name" value="Phosphoribosylaminoimidazole-succinocarboxamide synthase"/>
    <property type="match status" value="1"/>
</dbReference>
<dbReference type="Gene3D" id="3.30.470.20">
    <property type="entry name" value="ATP-grasp fold, B domain"/>
    <property type="match status" value="1"/>
</dbReference>
<dbReference type="Gene3D" id="3.30.200.20">
    <property type="entry name" value="Phosphorylase Kinase, domain 1"/>
    <property type="match status" value="1"/>
</dbReference>
<dbReference type="HAMAP" id="MF_00137">
    <property type="entry name" value="SAICAR_synth"/>
    <property type="match status" value="1"/>
</dbReference>
<dbReference type="InterPro" id="IPR028923">
    <property type="entry name" value="SAICAR_synt/ADE2_N"/>
</dbReference>
<dbReference type="InterPro" id="IPR033934">
    <property type="entry name" value="SAICAR_synt_PurC"/>
</dbReference>
<dbReference type="InterPro" id="IPR001636">
    <property type="entry name" value="SAICAR_synth"/>
</dbReference>
<dbReference type="InterPro" id="IPR050089">
    <property type="entry name" value="SAICAR_synthetase"/>
</dbReference>
<dbReference type="InterPro" id="IPR018236">
    <property type="entry name" value="SAICAR_synthetase_CS"/>
</dbReference>
<dbReference type="NCBIfam" id="TIGR00081">
    <property type="entry name" value="purC"/>
    <property type="match status" value="1"/>
</dbReference>
<dbReference type="PANTHER" id="PTHR43599">
    <property type="entry name" value="MULTIFUNCTIONAL PROTEIN ADE2"/>
    <property type="match status" value="1"/>
</dbReference>
<dbReference type="PANTHER" id="PTHR43599:SF3">
    <property type="entry name" value="SI:DKEY-6E2.2"/>
    <property type="match status" value="1"/>
</dbReference>
<dbReference type="Pfam" id="PF01259">
    <property type="entry name" value="SAICAR_synt"/>
    <property type="match status" value="1"/>
</dbReference>
<dbReference type="SUPFAM" id="SSF56104">
    <property type="entry name" value="SAICAR synthase-like"/>
    <property type="match status" value="1"/>
</dbReference>
<dbReference type="PROSITE" id="PS01057">
    <property type="entry name" value="SAICAR_SYNTHETASE_1"/>
    <property type="match status" value="1"/>
</dbReference>
<dbReference type="PROSITE" id="PS01058">
    <property type="entry name" value="SAICAR_SYNTHETASE_2"/>
    <property type="match status" value="1"/>
</dbReference>
<name>PUR7_STAAM</name>
<comment type="catalytic activity">
    <reaction evidence="1">
        <text>5-amino-1-(5-phospho-D-ribosyl)imidazole-4-carboxylate + L-aspartate + ATP = (2S)-2-[5-amino-1-(5-phospho-beta-D-ribosyl)imidazole-4-carboxamido]succinate + ADP + phosphate + 2 H(+)</text>
        <dbReference type="Rhea" id="RHEA:22628"/>
        <dbReference type="ChEBI" id="CHEBI:15378"/>
        <dbReference type="ChEBI" id="CHEBI:29991"/>
        <dbReference type="ChEBI" id="CHEBI:30616"/>
        <dbReference type="ChEBI" id="CHEBI:43474"/>
        <dbReference type="ChEBI" id="CHEBI:58443"/>
        <dbReference type="ChEBI" id="CHEBI:77657"/>
        <dbReference type="ChEBI" id="CHEBI:456216"/>
        <dbReference type="EC" id="6.3.2.6"/>
    </reaction>
</comment>
<comment type="pathway">
    <text evidence="1">Purine metabolism; IMP biosynthesis via de novo pathway; 5-amino-1-(5-phospho-D-ribosyl)imidazole-4-carboxamide from 5-amino-1-(5-phospho-D-ribosyl)imidazole-4-carboxylate: step 1/2.</text>
</comment>
<comment type="similarity">
    <text evidence="1">Belongs to the SAICAR synthetase family.</text>
</comment>
<gene>
    <name evidence="1" type="primary">purC</name>
    <name type="ordered locus">SAV1066</name>
</gene>
<keyword id="KW-0067">ATP-binding</keyword>
<keyword id="KW-0436">Ligase</keyword>
<keyword id="KW-0547">Nucleotide-binding</keyword>
<keyword id="KW-0658">Purine biosynthesis</keyword>
<sequence length="234" mass="26693">MTLLYEGKAKRIFSTNQENELRVEYKDEVTAGNGAKKDTMAGKGRLNNQITSIIFKYLQENGIESHFIKQLSETEQLVKPVKIIPLEVVVRNIASGSITKRLGFENGEVFREPLVEFFYKNDALNDPLITDDHVKLLNIASDEDIEILKSKALKINNVLKQLMDAMNLKLVDFKIEFGKTETGQILLADEISPDTCRIWDKATNANFDKDVYRNNTGSLIETYQIFLNKLEDLK</sequence>
<evidence type="ECO:0000255" key="1">
    <source>
        <dbReference type="HAMAP-Rule" id="MF_00137"/>
    </source>
</evidence>
<protein>
    <recommendedName>
        <fullName evidence="1">Phosphoribosylaminoimidazole-succinocarboxamide synthase</fullName>
        <ecNumber evidence="1">6.3.2.6</ecNumber>
    </recommendedName>
    <alternativeName>
        <fullName evidence="1">SAICAR synthetase</fullName>
    </alternativeName>
</protein>
<accession>P65891</accession>
<accession>Q99V31</accession>
<proteinExistence type="inferred from homology"/>
<organism>
    <name type="scientific">Staphylococcus aureus (strain Mu50 / ATCC 700699)</name>
    <dbReference type="NCBI Taxonomy" id="158878"/>
    <lineage>
        <taxon>Bacteria</taxon>
        <taxon>Bacillati</taxon>
        <taxon>Bacillota</taxon>
        <taxon>Bacilli</taxon>
        <taxon>Bacillales</taxon>
        <taxon>Staphylococcaceae</taxon>
        <taxon>Staphylococcus</taxon>
    </lineage>
</organism>
<reference key="1">
    <citation type="journal article" date="2001" name="Lancet">
        <title>Whole genome sequencing of meticillin-resistant Staphylococcus aureus.</title>
        <authorList>
            <person name="Kuroda M."/>
            <person name="Ohta T."/>
            <person name="Uchiyama I."/>
            <person name="Baba T."/>
            <person name="Yuzawa H."/>
            <person name="Kobayashi I."/>
            <person name="Cui L."/>
            <person name="Oguchi A."/>
            <person name="Aoki K."/>
            <person name="Nagai Y."/>
            <person name="Lian J.-Q."/>
            <person name="Ito T."/>
            <person name="Kanamori M."/>
            <person name="Matsumaru H."/>
            <person name="Maruyama A."/>
            <person name="Murakami H."/>
            <person name="Hosoyama A."/>
            <person name="Mizutani-Ui Y."/>
            <person name="Takahashi N.K."/>
            <person name="Sawano T."/>
            <person name="Inoue R."/>
            <person name="Kaito C."/>
            <person name="Sekimizu K."/>
            <person name="Hirakawa H."/>
            <person name="Kuhara S."/>
            <person name="Goto S."/>
            <person name="Yabuzaki J."/>
            <person name="Kanehisa M."/>
            <person name="Yamashita A."/>
            <person name="Oshima K."/>
            <person name="Furuya K."/>
            <person name="Yoshino C."/>
            <person name="Shiba T."/>
            <person name="Hattori M."/>
            <person name="Ogasawara N."/>
            <person name="Hayashi H."/>
            <person name="Hiramatsu K."/>
        </authorList>
    </citation>
    <scope>NUCLEOTIDE SEQUENCE [LARGE SCALE GENOMIC DNA]</scope>
    <source>
        <strain>Mu50 / ATCC 700699</strain>
    </source>
</reference>
<feature type="chain" id="PRO_0000100870" description="Phosphoribosylaminoimidazole-succinocarboxamide synthase">
    <location>
        <begin position="1"/>
        <end position="234"/>
    </location>
</feature>